<reference key="1">
    <citation type="journal article" date="2001" name="Biochim. Biophys. Acta">
        <title>Identification of the human crooked neck gene by comparative gene identification.</title>
        <authorList>
            <person name="Lai C.-H."/>
            <person name="Chiu J.-Y."/>
            <person name="Lin W.-C."/>
        </authorList>
    </citation>
    <scope>NUCLEOTIDE SEQUENCE [MRNA] (ISOFORMS 1; 2; 3; 4 AND 5)</scope>
    <scope>TISSUE SPECIFICITY</scope>
    <scope>VARIANT ARG-35</scope>
</reference>
<reference key="2">
    <citation type="journal article" date="2002" name="Biochim. Biophys. Acta">
        <title>Crooked neck is a component of the human spliceosome and implicated in the splicing process.</title>
        <authorList>
            <person name="Chung S."/>
            <person name="Zhou Z."/>
            <person name="Huddleston K.A."/>
            <person name="Harrison D.A."/>
            <person name="Reed R."/>
            <person name="Coleman T.A."/>
            <person name="Rymond B.C."/>
        </authorList>
    </citation>
    <scope>NUCLEOTIDE SEQUENCE (ISOFORMS 1 AND 2)</scope>
    <scope>FUNCTION</scope>
    <scope>SUBCELLULAR LOCATION</scope>
    <scope>TISSUE SPECIFICITY</scope>
    <scope>IDENTIFICATION IN SPLICEOSOMAL COMPLEX WITH HPRP8BP AND SNRPB2</scope>
    <source>
        <tissue>T lymphoblast</tissue>
    </source>
</reference>
<reference key="3">
    <citation type="submission" date="1998-12" db="EMBL/GenBank/DDBJ databases">
        <authorList>
            <person name="Xu Y.Y."/>
            <person name="Sun L.Z."/>
            <person name="Wu Q.Y."/>
            <person name="Liu Y.Q."/>
            <person name="Liu B."/>
            <person name="Zhao B."/>
            <person name="Wang X.Y."/>
            <person name="Song L."/>
            <person name="Ye J."/>
            <person name="Sheng H."/>
            <person name="Gao Y."/>
            <person name="Zhang C.L."/>
            <person name="Zhang J."/>
            <person name="Wei Y.J."/>
            <person name="Sun Y.H."/>
            <person name="Jiang Y.X."/>
            <person name="Zhao X.W."/>
            <person name="Liu S."/>
            <person name="Liu L.S."/>
            <person name="Ding J.F."/>
            <person name="Gao R.L."/>
            <person name="Qiang B.Q."/>
            <person name="Yuan J.G."/>
            <person name="Liew C.C."/>
            <person name="Zhao M.S."/>
            <person name="Hui R.T."/>
        </authorList>
    </citation>
    <scope>NUCLEOTIDE SEQUENCE (ISOFORM 2)</scope>
    <source>
        <tissue>Heart</tissue>
    </source>
</reference>
<reference key="4">
    <citation type="journal article" date="2004" name="Nat. Genet.">
        <title>Complete sequencing and characterization of 21,243 full-length human cDNAs.</title>
        <authorList>
            <person name="Ota T."/>
            <person name="Suzuki Y."/>
            <person name="Nishikawa T."/>
            <person name="Otsuki T."/>
            <person name="Sugiyama T."/>
            <person name="Irie R."/>
            <person name="Wakamatsu A."/>
            <person name="Hayashi K."/>
            <person name="Sato H."/>
            <person name="Nagai K."/>
            <person name="Kimura K."/>
            <person name="Makita H."/>
            <person name="Sekine M."/>
            <person name="Obayashi M."/>
            <person name="Nishi T."/>
            <person name="Shibahara T."/>
            <person name="Tanaka T."/>
            <person name="Ishii S."/>
            <person name="Yamamoto J."/>
            <person name="Saito K."/>
            <person name="Kawai Y."/>
            <person name="Isono Y."/>
            <person name="Nakamura Y."/>
            <person name="Nagahari K."/>
            <person name="Murakami K."/>
            <person name="Yasuda T."/>
            <person name="Iwayanagi T."/>
            <person name="Wagatsuma M."/>
            <person name="Shiratori A."/>
            <person name="Sudo H."/>
            <person name="Hosoiri T."/>
            <person name="Kaku Y."/>
            <person name="Kodaira H."/>
            <person name="Kondo H."/>
            <person name="Sugawara M."/>
            <person name="Takahashi M."/>
            <person name="Kanda K."/>
            <person name="Yokoi T."/>
            <person name="Furuya T."/>
            <person name="Kikkawa E."/>
            <person name="Omura Y."/>
            <person name="Abe K."/>
            <person name="Kamihara K."/>
            <person name="Katsuta N."/>
            <person name="Sato K."/>
            <person name="Tanikawa M."/>
            <person name="Yamazaki M."/>
            <person name="Ninomiya K."/>
            <person name="Ishibashi T."/>
            <person name="Yamashita H."/>
            <person name="Murakawa K."/>
            <person name="Fujimori K."/>
            <person name="Tanai H."/>
            <person name="Kimata M."/>
            <person name="Watanabe M."/>
            <person name="Hiraoka S."/>
            <person name="Chiba Y."/>
            <person name="Ishida S."/>
            <person name="Ono Y."/>
            <person name="Takiguchi S."/>
            <person name="Watanabe S."/>
            <person name="Yosida M."/>
            <person name="Hotuta T."/>
            <person name="Kusano J."/>
            <person name="Kanehori K."/>
            <person name="Takahashi-Fujii A."/>
            <person name="Hara H."/>
            <person name="Tanase T.-O."/>
            <person name="Nomura Y."/>
            <person name="Togiya S."/>
            <person name="Komai F."/>
            <person name="Hara R."/>
            <person name="Takeuchi K."/>
            <person name="Arita M."/>
            <person name="Imose N."/>
            <person name="Musashino K."/>
            <person name="Yuuki H."/>
            <person name="Oshima A."/>
            <person name="Sasaki N."/>
            <person name="Aotsuka S."/>
            <person name="Yoshikawa Y."/>
            <person name="Matsunawa H."/>
            <person name="Ichihara T."/>
            <person name="Shiohata N."/>
            <person name="Sano S."/>
            <person name="Moriya S."/>
            <person name="Momiyama H."/>
            <person name="Satoh N."/>
            <person name="Takami S."/>
            <person name="Terashima Y."/>
            <person name="Suzuki O."/>
            <person name="Nakagawa S."/>
            <person name="Senoh A."/>
            <person name="Mizoguchi H."/>
            <person name="Goto Y."/>
            <person name="Shimizu F."/>
            <person name="Wakebe H."/>
            <person name="Hishigaki H."/>
            <person name="Watanabe T."/>
            <person name="Sugiyama A."/>
            <person name="Takemoto M."/>
            <person name="Kawakami B."/>
            <person name="Yamazaki M."/>
            <person name="Watanabe K."/>
            <person name="Kumagai A."/>
            <person name="Itakura S."/>
            <person name="Fukuzumi Y."/>
            <person name="Fujimori Y."/>
            <person name="Komiyama M."/>
            <person name="Tashiro H."/>
            <person name="Tanigami A."/>
            <person name="Fujiwara T."/>
            <person name="Ono T."/>
            <person name="Yamada K."/>
            <person name="Fujii Y."/>
            <person name="Ozaki K."/>
            <person name="Hirao M."/>
            <person name="Ohmori Y."/>
            <person name="Kawabata A."/>
            <person name="Hikiji T."/>
            <person name="Kobatake N."/>
            <person name="Inagaki H."/>
            <person name="Ikema Y."/>
            <person name="Okamoto S."/>
            <person name="Okitani R."/>
            <person name="Kawakami T."/>
            <person name="Noguchi S."/>
            <person name="Itoh T."/>
            <person name="Shigeta K."/>
            <person name="Senba T."/>
            <person name="Matsumura K."/>
            <person name="Nakajima Y."/>
            <person name="Mizuno T."/>
            <person name="Morinaga M."/>
            <person name="Sasaki M."/>
            <person name="Togashi T."/>
            <person name="Oyama M."/>
            <person name="Hata H."/>
            <person name="Watanabe M."/>
            <person name="Komatsu T."/>
            <person name="Mizushima-Sugano J."/>
            <person name="Satoh T."/>
            <person name="Shirai Y."/>
            <person name="Takahashi Y."/>
            <person name="Nakagawa K."/>
            <person name="Okumura K."/>
            <person name="Nagase T."/>
            <person name="Nomura N."/>
            <person name="Kikuchi H."/>
            <person name="Masuho Y."/>
            <person name="Yamashita R."/>
            <person name="Nakai K."/>
            <person name="Yada T."/>
            <person name="Nakamura Y."/>
            <person name="Ohara O."/>
            <person name="Isogai T."/>
            <person name="Sugano S."/>
        </authorList>
    </citation>
    <scope>NUCLEOTIDE SEQUENCE [LARGE SCALE MRNA] (ISOFORM 2)</scope>
    <source>
        <tissue>Placenta</tissue>
        <tissue>Trachea</tissue>
    </source>
</reference>
<reference key="5">
    <citation type="journal article" date="2001" name="Nature">
        <title>The DNA sequence and comparative analysis of human chromosome 20.</title>
        <authorList>
            <person name="Deloukas P."/>
            <person name="Matthews L.H."/>
            <person name="Ashurst J.L."/>
            <person name="Burton J."/>
            <person name="Gilbert J.G.R."/>
            <person name="Jones M."/>
            <person name="Stavrides G."/>
            <person name="Almeida J.P."/>
            <person name="Babbage A.K."/>
            <person name="Bagguley C.L."/>
            <person name="Bailey J."/>
            <person name="Barlow K.F."/>
            <person name="Bates K.N."/>
            <person name="Beard L.M."/>
            <person name="Beare D.M."/>
            <person name="Beasley O.P."/>
            <person name="Bird C.P."/>
            <person name="Blakey S.E."/>
            <person name="Bridgeman A.M."/>
            <person name="Brown A.J."/>
            <person name="Buck D."/>
            <person name="Burrill W.D."/>
            <person name="Butler A.P."/>
            <person name="Carder C."/>
            <person name="Carter N.P."/>
            <person name="Chapman J.C."/>
            <person name="Clamp M."/>
            <person name="Clark G."/>
            <person name="Clark L.N."/>
            <person name="Clark S.Y."/>
            <person name="Clee C.M."/>
            <person name="Clegg S."/>
            <person name="Cobley V.E."/>
            <person name="Collier R.E."/>
            <person name="Connor R.E."/>
            <person name="Corby N.R."/>
            <person name="Coulson A."/>
            <person name="Coville G.J."/>
            <person name="Deadman R."/>
            <person name="Dhami P.D."/>
            <person name="Dunn M."/>
            <person name="Ellington A.G."/>
            <person name="Frankland J.A."/>
            <person name="Fraser A."/>
            <person name="French L."/>
            <person name="Garner P."/>
            <person name="Grafham D.V."/>
            <person name="Griffiths C."/>
            <person name="Griffiths M.N.D."/>
            <person name="Gwilliam R."/>
            <person name="Hall R.E."/>
            <person name="Hammond S."/>
            <person name="Harley J.L."/>
            <person name="Heath P.D."/>
            <person name="Ho S."/>
            <person name="Holden J.L."/>
            <person name="Howden P.J."/>
            <person name="Huckle E."/>
            <person name="Hunt A.R."/>
            <person name="Hunt S.E."/>
            <person name="Jekosch K."/>
            <person name="Johnson C.M."/>
            <person name="Johnson D."/>
            <person name="Kay M.P."/>
            <person name="Kimberley A.M."/>
            <person name="King A."/>
            <person name="Knights A."/>
            <person name="Laird G.K."/>
            <person name="Lawlor S."/>
            <person name="Lehvaeslaiho M.H."/>
            <person name="Leversha M.A."/>
            <person name="Lloyd C."/>
            <person name="Lloyd D.M."/>
            <person name="Lovell J.D."/>
            <person name="Marsh V.L."/>
            <person name="Martin S.L."/>
            <person name="McConnachie L.J."/>
            <person name="McLay K."/>
            <person name="McMurray A.A."/>
            <person name="Milne S.A."/>
            <person name="Mistry D."/>
            <person name="Moore M.J.F."/>
            <person name="Mullikin J.C."/>
            <person name="Nickerson T."/>
            <person name="Oliver K."/>
            <person name="Parker A."/>
            <person name="Patel R."/>
            <person name="Pearce T.A.V."/>
            <person name="Peck A.I."/>
            <person name="Phillimore B.J.C.T."/>
            <person name="Prathalingam S.R."/>
            <person name="Plumb R.W."/>
            <person name="Ramsay H."/>
            <person name="Rice C.M."/>
            <person name="Ross M.T."/>
            <person name="Scott C.E."/>
            <person name="Sehra H.K."/>
            <person name="Shownkeen R."/>
            <person name="Sims S."/>
            <person name="Skuce C.D."/>
            <person name="Smith M.L."/>
            <person name="Soderlund C."/>
            <person name="Steward C.A."/>
            <person name="Sulston J.E."/>
            <person name="Swann R.M."/>
            <person name="Sycamore N."/>
            <person name="Taylor R."/>
            <person name="Tee L."/>
            <person name="Thomas D.W."/>
            <person name="Thorpe A."/>
            <person name="Tracey A."/>
            <person name="Tromans A.C."/>
            <person name="Vaudin M."/>
            <person name="Wall M."/>
            <person name="Wallis J.M."/>
            <person name="Whitehead S.L."/>
            <person name="Whittaker P."/>
            <person name="Willey D.L."/>
            <person name="Williams L."/>
            <person name="Williams S.A."/>
            <person name="Wilming L."/>
            <person name="Wray P.W."/>
            <person name="Hubbard T."/>
            <person name="Durbin R.M."/>
            <person name="Bentley D.R."/>
            <person name="Beck S."/>
            <person name="Rogers J."/>
        </authorList>
    </citation>
    <scope>NUCLEOTIDE SEQUENCE [LARGE SCALE GENOMIC DNA]</scope>
</reference>
<reference key="6">
    <citation type="journal article" date="2002" name="RNA">
        <title>Purification and characterization of native spliceosomes suitable for three-dimensional structural analysis.</title>
        <authorList>
            <person name="Jurica M.S."/>
            <person name="Licklider L.J."/>
            <person name="Gygi S.P."/>
            <person name="Grigorieff N."/>
            <person name="Moore M.J."/>
        </authorList>
    </citation>
    <scope>IDENTIFICATION BY MASS SPECTROMETRY</scope>
    <scope>IDENTIFICATION IN THE SPLICEOSOMAL C COMPLEX</scope>
    <scope>FUNCTION</scope>
    <scope>SUBCELLULAR LOCATION</scope>
    <scope>SUBUNIT</scope>
</reference>
<reference key="7">
    <citation type="journal article" date="2003" name="J. Biochem.">
        <title>A novel rat orthologue and homologue for the Drosophila crooked neck gene in neural stem cells and their immediate descendants.</title>
        <authorList>
            <person name="Amada N."/>
            <person name="Tezuka T."/>
            <person name="Mayeda A."/>
            <person name="Araki K."/>
            <person name="Takei N."/>
            <person name="Todokoro K."/>
            <person name="Nawa H."/>
        </authorList>
    </citation>
    <scope>SUBCELLULAR LOCATION</scope>
</reference>
<reference key="8">
    <citation type="journal article" date="2004" name="Genes Cells">
        <title>Interaction of U-box-type ubiquitin-protein ligases (E3s) with molecular chaperones.</title>
        <authorList>
            <person name="Hatakeyama S."/>
            <person name="Matsumoto M."/>
            <person name="Yada M."/>
            <person name="Nakayama K.I."/>
        </authorList>
    </citation>
    <scope>INTERACTION WITH PPIL2 AND HSP90</scope>
</reference>
<reference key="9">
    <citation type="journal article" date="2004" name="Genome Biol.">
        <title>An unappreciated role for RNA surveillance.</title>
        <authorList>
            <person name="Hillman R.T."/>
            <person name="Green R.E."/>
            <person name="Brenner S.E."/>
        </authorList>
    </citation>
    <scope>SPLICE ISOFORM(S) THAT ARE POTENTIAL NMD TARGET(S)</scope>
</reference>
<reference key="10">
    <citation type="journal article" date="2011" name="BMC Syst. Biol.">
        <title>Initial characterization of the human central proteome.</title>
        <authorList>
            <person name="Burkard T.R."/>
            <person name="Planyavsky M."/>
            <person name="Kaupe I."/>
            <person name="Breitwieser F.P."/>
            <person name="Buerckstuemmer T."/>
            <person name="Bennett K.L."/>
            <person name="Superti-Furga G."/>
            <person name="Colinge J."/>
        </authorList>
    </citation>
    <scope>IDENTIFICATION BY MASS SPECTROMETRY [LARGE SCALE ANALYSIS]</scope>
</reference>
<reference key="11">
    <citation type="journal article" date="2012" name="Proc. Natl. Acad. Sci. U.S.A.">
        <title>N-terminal acetylome analyses and functional insights of the N-terminal acetyltransferase NatB.</title>
        <authorList>
            <person name="Van Damme P."/>
            <person name="Lasa M."/>
            <person name="Polevoda B."/>
            <person name="Gazquez C."/>
            <person name="Elosegui-Artola A."/>
            <person name="Kim D.S."/>
            <person name="De Juan-Pardo E."/>
            <person name="Demeyer K."/>
            <person name="Hole K."/>
            <person name="Larrea E."/>
            <person name="Timmerman E."/>
            <person name="Prieto J."/>
            <person name="Arnesen T."/>
            <person name="Sherman F."/>
            <person name="Gevaert K."/>
            <person name="Aldabe R."/>
        </authorList>
    </citation>
    <scope>ACETYLATION [LARGE SCALE ANALYSIS] AT ALA-2 (ISOFORM 2)</scope>
    <scope>CLEAVAGE OF INITIATOR METHIONINE [LARGE SCALE ANALYSIS] (ISOFORM 2)</scope>
    <scope>IDENTIFICATION BY MASS SPECTROMETRY [LARGE SCALE ANALYSIS]</scope>
</reference>
<reference key="12">
    <citation type="journal article" date="2013" name="J. Proteome Res.">
        <title>Toward a comprehensive characterization of a human cancer cell phosphoproteome.</title>
        <authorList>
            <person name="Zhou H."/>
            <person name="Di Palma S."/>
            <person name="Preisinger C."/>
            <person name="Peng M."/>
            <person name="Polat A.N."/>
            <person name="Heck A.J."/>
            <person name="Mohammed S."/>
        </authorList>
    </citation>
    <scope>PHOSPHORYLATION [LARGE SCALE ANALYSIS] AT SER-503</scope>
    <scope>IDENTIFICATION BY MASS SPECTROMETRY [LARGE SCALE ANALYSIS]</scope>
    <source>
        <tissue>Cervix carcinoma</tissue>
    </source>
</reference>
<reference evidence="16" key="13">
    <citation type="journal article" date="2017" name="Cell">
        <title>An Atomic Structure of the Human Spliceosome.</title>
        <authorList>
            <person name="Zhang X."/>
            <person name="Yan C."/>
            <person name="Hang J."/>
            <person name="Finci L.I."/>
            <person name="Lei J."/>
            <person name="Shi Y."/>
        </authorList>
    </citation>
    <scope>STRUCTURE BY ELECTRON MICROSCOPY (3.60 ANGSTROMS)</scope>
    <scope>FUNCTION</scope>
    <scope>SUBUNIT</scope>
    <scope>SUBCELLULAR LOCATION</scope>
</reference>
<reference evidence="15" key="14">
    <citation type="journal article" date="2017" name="Nature">
        <title>Cryo-EM structure of a human spliceosome activated for step 2 of splicing.</title>
        <authorList>
            <person name="Bertram K."/>
            <person name="Agafonov D.E."/>
            <person name="Liu W.T."/>
            <person name="Dybkov O."/>
            <person name="Will C.L."/>
            <person name="Hartmuth K."/>
            <person name="Urlaub H."/>
            <person name="Kastner B."/>
            <person name="Stark H."/>
            <person name="Luhrmann R."/>
        </authorList>
    </citation>
    <scope>STRUCTURE BY ELECTRON MICROSCOPY (5.90 ANGSTROMS)</scope>
    <scope>FUNCTION</scope>
    <scope>SUBUNIT</scope>
    <scope>SUBCELLULAR LOCATION</scope>
    <scope>IDENTIFICATION BY MASS SPECTROMETRY</scope>
</reference>
<reference evidence="17" key="15">
    <citation type="journal article" date="2021" name="Science">
        <title>Structure of the activated human minor spliceosome.</title>
        <authorList>
            <person name="Bai R."/>
            <person name="Wan R."/>
            <person name="Wang L."/>
            <person name="Xu K."/>
            <person name="Zhang Q."/>
            <person name="Lei J."/>
            <person name="Shi Y."/>
        </authorList>
    </citation>
    <scope>STRUCTURE BY ELECTRON MICROSCOPY (2.89 ANGSTROMS)</scope>
    <scope>SUBUNIT</scope>
</reference>
<dbReference type="EMBL" id="AF255443">
    <property type="protein sequence ID" value="AAF65571.2"/>
    <property type="molecule type" value="mRNA"/>
</dbReference>
<dbReference type="EMBL" id="AF318302">
    <property type="protein sequence ID" value="AAK01924.1"/>
    <property type="molecule type" value="mRNA"/>
</dbReference>
<dbReference type="EMBL" id="AF318303">
    <property type="protein sequence ID" value="AAK01925.1"/>
    <property type="molecule type" value="mRNA"/>
</dbReference>
<dbReference type="EMBL" id="AF318304">
    <property type="protein sequence ID" value="AAK01926.1"/>
    <property type="molecule type" value="mRNA"/>
</dbReference>
<dbReference type="EMBL" id="AF318305">
    <property type="protein sequence ID" value="AAK01927.1"/>
    <property type="molecule type" value="mRNA"/>
</dbReference>
<dbReference type="EMBL" id="AF111802">
    <property type="protein sequence ID" value="AAL39004.1"/>
    <property type="molecule type" value="mRNA"/>
</dbReference>
<dbReference type="EMBL" id="AK023246">
    <property type="protein sequence ID" value="BAB14485.1"/>
    <property type="status" value="ALT_INIT"/>
    <property type="molecule type" value="mRNA"/>
</dbReference>
<dbReference type="EMBL" id="AK023728">
    <property type="protein sequence ID" value="BAB14659.1"/>
    <property type="molecule type" value="mRNA"/>
</dbReference>
<dbReference type="EMBL" id="AK292799">
    <property type="protein sequence ID" value="BAF85488.1"/>
    <property type="molecule type" value="mRNA"/>
</dbReference>
<dbReference type="EMBL" id="AL035454">
    <property type="status" value="NOT_ANNOTATED_CDS"/>
    <property type="molecule type" value="Genomic_DNA"/>
</dbReference>
<dbReference type="EMBL" id="AK022908">
    <property type="protein sequence ID" value="BAB14303.1"/>
    <property type="status" value="ALT_INIT"/>
    <property type="molecule type" value="mRNA"/>
</dbReference>
<dbReference type="CCDS" id="CCDS33446.1">
    <molecule id="Q9BZJ0-1"/>
</dbReference>
<dbReference type="CCDS" id="CCDS63238.1">
    <molecule id="Q9BZJ0-2"/>
</dbReference>
<dbReference type="CCDS" id="CCDS63239.1">
    <molecule id="Q9BZJ0-3"/>
</dbReference>
<dbReference type="RefSeq" id="NP_001265554.1">
    <property type="nucleotide sequence ID" value="NM_001278625.1"/>
</dbReference>
<dbReference type="RefSeq" id="NP_001265555.1">
    <property type="nucleotide sequence ID" value="NM_001278626.1"/>
</dbReference>
<dbReference type="RefSeq" id="NP_001265556.1">
    <property type="nucleotide sequence ID" value="NM_001278627.1"/>
</dbReference>
<dbReference type="RefSeq" id="NP_001265557.1">
    <molecule id="Q9BZJ0-2"/>
    <property type="nucleotide sequence ID" value="NM_001278628.2"/>
</dbReference>
<dbReference type="RefSeq" id="NP_057736.4">
    <molecule id="Q9BZJ0-1"/>
    <property type="nucleotide sequence ID" value="NM_016652.5"/>
</dbReference>
<dbReference type="PDB" id="5MQF">
    <property type="method" value="EM"/>
    <property type="resolution" value="5.90 A"/>
    <property type="chains" value="O=1-848"/>
</dbReference>
<dbReference type="PDB" id="5XJC">
    <property type="method" value="EM"/>
    <property type="resolution" value="3.60 A"/>
    <property type="chains" value="J=1-848"/>
</dbReference>
<dbReference type="PDB" id="5YZG">
    <property type="method" value="EM"/>
    <property type="resolution" value="4.10 A"/>
    <property type="chains" value="J=1-848"/>
</dbReference>
<dbReference type="PDB" id="5Z56">
    <property type="method" value="EM"/>
    <property type="resolution" value="5.10 A"/>
    <property type="chains" value="J=1-848"/>
</dbReference>
<dbReference type="PDB" id="5Z57">
    <property type="method" value="EM"/>
    <property type="resolution" value="6.50 A"/>
    <property type="chains" value="J=1-848"/>
</dbReference>
<dbReference type="PDB" id="5Z58">
    <property type="method" value="EM"/>
    <property type="resolution" value="4.90 A"/>
    <property type="chains" value="J=1-848"/>
</dbReference>
<dbReference type="PDB" id="6FF4">
    <property type="method" value="EM"/>
    <property type="resolution" value="16.00 A"/>
    <property type="chains" value="O=1-848"/>
</dbReference>
<dbReference type="PDB" id="6FF7">
    <property type="method" value="EM"/>
    <property type="resolution" value="4.50 A"/>
    <property type="chains" value="O=1-848"/>
</dbReference>
<dbReference type="PDB" id="6ICZ">
    <property type="method" value="EM"/>
    <property type="resolution" value="3.00 A"/>
    <property type="chains" value="J=1-848"/>
</dbReference>
<dbReference type="PDB" id="6ID0">
    <property type="method" value="EM"/>
    <property type="resolution" value="2.90 A"/>
    <property type="chains" value="J=1-848"/>
</dbReference>
<dbReference type="PDB" id="6ID1">
    <property type="method" value="EM"/>
    <property type="resolution" value="2.86 A"/>
    <property type="chains" value="J=1-848"/>
</dbReference>
<dbReference type="PDB" id="6QDV">
    <property type="method" value="EM"/>
    <property type="resolution" value="3.30 A"/>
    <property type="chains" value="S=1-848"/>
</dbReference>
<dbReference type="PDB" id="6ZYM">
    <property type="method" value="EM"/>
    <property type="resolution" value="3.40 A"/>
    <property type="chains" value="O=1-848"/>
</dbReference>
<dbReference type="PDB" id="7A5P">
    <property type="method" value="EM"/>
    <property type="resolution" value="5.00 A"/>
    <property type="chains" value="O=1-848"/>
</dbReference>
<dbReference type="PDB" id="7ABI">
    <property type="method" value="EM"/>
    <property type="resolution" value="8.00 A"/>
    <property type="chains" value="O=1-848"/>
</dbReference>
<dbReference type="PDB" id="7DVQ">
    <property type="method" value="EM"/>
    <property type="resolution" value="2.89 A"/>
    <property type="chains" value="J=1-848"/>
</dbReference>
<dbReference type="PDB" id="7QTT">
    <property type="method" value="EM"/>
    <property type="resolution" value="3.10 A"/>
    <property type="chains" value="X=1-848"/>
</dbReference>
<dbReference type="PDB" id="7W59">
    <property type="method" value="EM"/>
    <property type="resolution" value="3.60 A"/>
    <property type="chains" value="J=1-848"/>
</dbReference>
<dbReference type="PDB" id="7W5A">
    <property type="method" value="EM"/>
    <property type="resolution" value="3.60 A"/>
    <property type="chains" value="J=1-848"/>
</dbReference>
<dbReference type="PDB" id="7W5B">
    <property type="method" value="EM"/>
    <property type="resolution" value="4.30 A"/>
    <property type="chains" value="J=1-848"/>
</dbReference>
<dbReference type="PDB" id="8C6J">
    <property type="method" value="EM"/>
    <property type="resolution" value="2.80 A"/>
    <property type="chains" value="S=162-848"/>
</dbReference>
<dbReference type="PDB" id="8CH6">
    <property type="method" value="EM"/>
    <property type="resolution" value="5.90 A"/>
    <property type="chains" value="X=1-848"/>
</dbReference>
<dbReference type="PDB" id="8I0P">
    <property type="method" value="EM"/>
    <property type="resolution" value="3.40 A"/>
    <property type="chains" value="J=1-848"/>
</dbReference>
<dbReference type="PDB" id="8I0R">
    <property type="method" value="EM"/>
    <property type="resolution" value="3.00 A"/>
    <property type="chains" value="J=1-848"/>
</dbReference>
<dbReference type="PDB" id="8I0S">
    <property type="method" value="EM"/>
    <property type="resolution" value="4.20 A"/>
    <property type="chains" value="J=1-848"/>
</dbReference>
<dbReference type="PDB" id="8I0T">
    <property type="method" value="EM"/>
    <property type="resolution" value="3.00 A"/>
    <property type="chains" value="J=1-848"/>
</dbReference>
<dbReference type="PDB" id="8I0U">
    <property type="method" value="EM"/>
    <property type="resolution" value="3.30 A"/>
    <property type="chains" value="J=1-848"/>
</dbReference>
<dbReference type="PDB" id="8I0V">
    <property type="method" value="EM"/>
    <property type="resolution" value="3.00 A"/>
    <property type="chains" value="J=1-848"/>
</dbReference>
<dbReference type="PDB" id="8I0W">
    <property type="method" value="EM"/>
    <property type="resolution" value="3.40 A"/>
    <property type="chains" value="J=1-848"/>
</dbReference>
<dbReference type="PDB" id="8RO2">
    <property type="method" value="EM"/>
    <property type="resolution" value="3.50 A"/>
    <property type="chains" value="J=1-848"/>
</dbReference>
<dbReference type="PDB" id="9FMD">
    <property type="method" value="EM"/>
    <property type="resolution" value="3.30 A"/>
    <property type="chains" value="J=1-848"/>
</dbReference>
<dbReference type="PDBsum" id="5MQF"/>
<dbReference type="PDBsum" id="5XJC"/>
<dbReference type="PDBsum" id="5YZG"/>
<dbReference type="PDBsum" id="5Z56"/>
<dbReference type="PDBsum" id="5Z57"/>
<dbReference type="PDBsum" id="5Z58"/>
<dbReference type="PDBsum" id="6FF4"/>
<dbReference type="PDBsum" id="6FF7"/>
<dbReference type="PDBsum" id="6ICZ"/>
<dbReference type="PDBsum" id="6ID0"/>
<dbReference type="PDBsum" id="6ID1"/>
<dbReference type="PDBsum" id="6QDV"/>
<dbReference type="PDBsum" id="6ZYM"/>
<dbReference type="PDBsum" id="7A5P"/>
<dbReference type="PDBsum" id="7ABI"/>
<dbReference type="PDBsum" id="7DVQ"/>
<dbReference type="PDBsum" id="7QTT"/>
<dbReference type="PDBsum" id="7W59"/>
<dbReference type="PDBsum" id="7W5A"/>
<dbReference type="PDBsum" id="7W5B"/>
<dbReference type="PDBsum" id="8C6J"/>
<dbReference type="PDBsum" id="8CH6"/>
<dbReference type="PDBsum" id="8I0P"/>
<dbReference type="PDBsum" id="8I0R"/>
<dbReference type="PDBsum" id="8I0S"/>
<dbReference type="PDBsum" id="8I0T"/>
<dbReference type="PDBsum" id="8I0U"/>
<dbReference type="PDBsum" id="8I0V"/>
<dbReference type="PDBsum" id="8I0W"/>
<dbReference type="PDBsum" id="8RO2"/>
<dbReference type="PDBsum" id="9FMD"/>
<dbReference type="EMDB" id="EMD-11569"/>
<dbReference type="EMDB" id="EMD-11697"/>
<dbReference type="EMDB" id="EMD-14146"/>
<dbReference type="EMDB" id="EMD-16452"/>
<dbReference type="EMDB" id="EMD-16658"/>
<dbReference type="EMDB" id="EMD-19399"/>
<dbReference type="EMDB" id="EMD-30875"/>
<dbReference type="EMDB" id="EMD-32317"/>
<dbReference type="EMDB" id="EMD-32319"/>
<dbReference type="EMDB" id="EMD-32321"/>
<dbReference type="EMDB" id="EMD-35105"/>
<dbReference type="EMDB" id="EMD-35107"/>
<dbReference type="EMDB" id="EMD-35108"/>
<dbReference type="EMDB" id="EMD-35109"/>
<dbReference type="EMDB" id="EMD-35110"/>
<dbReference type="EMDB" id="EMD-35111"/>
<dbReference type="EMDB" id="EMD-35113"/>
<dbReference type="EMDB" id="EMD-3545"/>
<dbReference type="EMDB" id="EMD-4255"/>
<dbReference type="EMDB" id="EMD-4525"/>
<dbReference type="EMDB" id="EMD-6721"/>
<dbReference type="EMDB" id="EMD-6864"/>
<dbReference type="EMDB" id="EMD-6889"/>
<dbReference type="EMDB" id="EMD-6890"/>
<dbReference type="EMDB" id="EMD-6891"/>
<dbReference type="EMDB" id="EMD-9645"/>
<dbReference type="EMDB" id="EMD-9646"/>
<dbReference type="EMDB" id="EMD-9647"/>
<dbReference type="SMR" id="Q9BZJ0"/>
<dbReference type="BioGRID" id="119487">
    <property type="interactions" value="186"/>
</dbReference>
<dbReference type="CORUM" id="Q9BZJ0"/>
<dbReference type="FunCoup" id="Q9BZJ0">
    <property type="interactions" value="2965"/>
</dbReference>
<dbReference type="IntAct" id="Q9BZJ0">
    <property type="interactions" value="112"/>
</dbReference>
<dbReference type="MINT" id="Q9BZJ0"/>
<dbReference type="STRING" id="9606.ENSP00000366557"/>
<dbReference type="GlyGen" id="Q9BZJ0">
    <property type="glycosylation" value="2 sites, 1 N-linked glycan (1 site), 1 O-linked glycan (1 site)"/>
</dbReference>
<dbReference type="iPTMnet" id="Q9BZJ0"/>
<dbReference type="PhosphoSitePlus" id="Q9BZJ0"/>
<dbReference type="SwissPalm" id="Q9BZJ0"/>
<dbReference type="BioMuta" id="CRNKL1"/>
<dbReference type="DMDM" id="147744555"/>
<dbReference type="jPOST" id="Q9BZJ0"/>
<dbReference type="MassIVE" id="Q9BZJ0"/>
<dbReference type="PaxDb" id="9606-ENSP00000366557"/>
<dbReference type="PeptideAtlas" id="Q9BZJ0"/>
<dbReference type="ProteomicsDB" id="79851">
    <molecule id="Q9BZJ0-1"/>
</dbReference>
<dbReference type="ProteomicsDB" id="79852">
    <molecule id="Q9BZJ0-2"/>
</dbReference>
<dbReference type="ProteomicsDB" id="79853">
    <molecule id="Q9BZJ0-3"/>
</dbReference>
<dbReference type="Pumba" id="Q9BZJ0"/>
<dbReference type="Antibodypedia" id="9534">
    <property type="antibodies" value="61 antibodies from 13 providers"/>
</dbReference>
<dbReference type="DNASU" id="51340"/>
<dbReference type="Ensembl" id="ENST00000377340.6">
    <molecule id="Q9BZJ0-1"/>
    <property type="protein sequence ID" value="ENSP00000366557.2"/>
    <property type="gene ID" value="ENSG00000101343.15"/>
</dbReference>
<dbReference type="Ensembl" id="ENST00000496549.5">
    <molecule id="Q9BZJ0-5"/>
    <property type="protein sequence ID" value="ENSP00000428436.1"/>
    <property type="gene ID" value="ENSG00000101343.15"/>
</dbReference>
<dbReference type="Ensembl" id="ENST00000536226.2">
    <molecule id="Q9BZJ0-2"/>
    <property type="protein sequence ID" value="ENSP00000440733.1"/>
    <property type="gene ID" value="ENSG00000101343.15"/>
</dbReference>
<dbReference type="GeneID" id="51340"/>
<dbReference type="KEGG" id="hsa:51340"/>
<dbReference type="MANE-Select" id="ENST00000536226.2">
    <molecule id="Q9BZJ0-2"/>
    <property type="protein sequence ID" value="ENSP00000440733.1"/>
    <property type="RefSeq nucleotide sequence ID" value="NM_001278628.2"/>
    <property type="RefSeq protein sequence ID" value="NP_001265557.1"/>
</dbReference>
<dbReference type="UCSC" id="uc002wrs.5">
    <molecule id="Q9BZJ0-1"/>
    <property type="organism name" value="human"/>
</dbReference>
<dbReference type="AGR" id="HGNC:15762"/>
<dbReference type="CTD" id="51340"/>
<dbReference type="DisGeNET" id="51340"/>
<dbReference type="GeneCards" id="CRNKL1"/>
<dbReference type="HGNC" id="HGNC:15762">
    <property type="gene designation" value="CRNKL1"/>
</dbReference>
<dbReference type="HPA" id="ENSG00000101343">
    <property type="expression patterns" value="Low tissue specificity"/>
</dbReference>
<dbReference type="MIM" id="610952">
    <property type="type" value="gene"/>
</dbReference>
<dbReference type="neXtProt" id="NX_Q9BZJ0"/>
<dbReference type="OpenTargets" id="ENSG00000101343"/>
<dbReference type="PharmGKB" id="PA26886"/>
<dbReference type="VEuPathDB" id="HostDB:ENSG00000101343"/>
<dbReference type="eggNOG" id="KOG1915">
    <property type="taxonomic scope" value="Eukaryota"/>
</dbReference>
<dbReference type="GeneTree" id="ENSGT00550000074931"/>
<dbReference type="HOGENOM" id="CLU_2687132_0_0_1"/>
<dbReference type="InParanoid" id="Q9BZJ0"/>
<dbReference type="OMA" id="HIKVWIS"/>
<dbReference type="OrthoDB" id="541719at2759"/>
<dbReference type="PAN-GO" id="Q9BZJ0">
    <property type="GO annotations" value="5 GO annotations based on evolutionary models"/>
</dbReference>
<dbReference type="PhylomeDB" id="Q9BZJ0"/>
<dbReference type="TreeFam" id="TF300305"/>
<dbReference type="PathwayCommons" id="Q9BZJ0"/>
<dbReference type="Reactome" id="R-HSA-72163">
    <property type="pathway name" value="mRNA Splicing - Major Pathway"/>
</dbReference>
<dbReference type="SignaLink" id="Q9BZJ0"/>
<dbReference type="BioGRID-ORCS" id="51340">
    <property type="hits" value="801 hits in 1161 CRISPR screens"/>
</dbReference>
<dbReference type="CD-CODE" id="804901D1">
    <property type="entry name" value="Nuclear speckle"/>
</dbReference>
<dbReference type="ChiTaRS" id="CRNKL1">
    <property type="organism name" value="human"/>
</dbReference>
<dbReference type="GenomeRNAi" id="51340"/>
<dbReference type="Pharos" id="Q9BZJ0">
    <property type="development level" value="Tbio"/>
</dbReference>
<dbReference type="PRO" id="PR:Q9BZJ0"/>
<dbReference type="Proteomes" id="UP000005640">
    <property type="component" value="Chromosome 20"/>
</dbReference>
<dbReference type="RNAct" id="Q9BZJ0">
    <property type="molecule type" value="protein"/>
</dbReference>
<dbReference type="Bgee" id="ENSG00000101343">
    <property type="expression patterns" value="Expressed in calcaneal tendon and 195 other cell types or tissues"/>
</dbReference>
<dbReference type="ExpressionAtlas" id="Q9BZJ0">
    <property type="expression patterns" value="baseline and differential"/>
</dbReference>
<dbReference type="GO" id="GO:0071013">
    <property type="term" value="C:catalytic step 2 spliceosome"/>
    <property type="evidence" value="ECO:0000314"/>
    <property type="project" value="UniProtKB"/>
</dbReference>
<dbReference type="GO" id="GO:0016607">
    <property type="term" value="C:nuclear speck"/>
    <property type="evidence" value="ECO:0007669"/>
    <property type="project" value="UniProtKB-SubCell"/>
</dbReference>
<dbReference type="GO" id="GO:0005654">
    <property type="term" value="C:nucleoplasm"/>
    <property type="evidence" value="ECO:0000304"/>
    <property type="project" value="Reactome"/>
</dbReference>
<dbReference type="GO" id="GO:0005634">
    <property type="term" value="C:nucleus"/>
    <property type="evidence" value="ECO:0000314"/>
    <property type="project" value="UniProtKB"/>
</dbReference>
<dbReference type="GO" id="GO:0071014">
    <property type="term" value="C:post-mRNA release spliceosomal complex"/>
    <property type="evidence" value="ECO:0000318"/>
    <property type="project" value="GO_Central"/>
</dbReference>
<dbReference type="GO" id="GO:0000974">
    <property type="term" value="C:Prp19 complex"/>
    <property type="evidence" value="ECO:0000318"/>
    <property type="project" value="GO_Central"/>
</dbReference>
<dbReference type="GO" id="GO:0005681">
    <property type="term" value="C:spliceosomal complex"/>
    <property type="evidence" value="ECO:0000314"/>
    <property type="project" value="UniProtKB"/>
</dbReference>
<dbReference type="GO" id="GO:0071007">
    <property type="term" value="C:U2-type catalytic step 2 spliceosome"/>
    <property type="evidence" value="ECO:0000314"/>
    <property type="project" value="UniProtKB"/>
</dbReference>
<dbReference type="GO" id="GO:0003723">
    <property type="term" value="F:RNA binding"/>
    <property type="evidence" value="ECO:0000314"/>
    <property type="project" value="UniProtKB"/>
</dbReference>
<dbReference type="GO" id="GO:0000398">
    <property type="term" value="P:mRNA splicing, via spliceosome"/>
    <property type="evidence" value="ECO:0000314"/>
    <property type="project" value="UniProtKB"/>
</dbReference>
<dbReference type="GO" id="GO:0000245">
    <property type="term" value="P:spliceosomal complex assembly"/>
    <property type="evidence" value="ECO:0000314"/>
    <property type="project" value="UniProtKB"/>
</dbReference>
<dbReference type="FunFam" id="1.25.40.10:FF:000075">
    <property type="entry name" value="Crooked neck pre-mRNA-splicing factor 1"/>
    <property type="match status" value="1"/>
</dbReference>
<dbReference type="FunFam" id="1.25.40.10:FF:000117">
    <property type="entry name" value="Crooked neck pre-mRNA-splicing factor 1"/>
    <property type="match status" value="1"/>
</dbReference>
<dbReference type="FunFam" id="1.25.40.10:FF:000269">
    <property type="entry name" value="Crooked neck pre-mRNA-splicing factor 1"/>
    <property type="match status" value="1"/>
</dbReference>
<dbReference type="Gene3D" id="1.25.40.10">
    <property type="entry name" value="Tetratricopeptide repeat domain"/>
    <property type="match status" value="3"/>
</dbReference>
<dbReference type="InterPro" id="IPR003107">
    <property type="entry name" value="HAT"/>
</dbReference>
<dbReference type="InterPro" id="IPR055430">
    <property type="entry name" value="HAT_Syf1_CNRKL1_C"/>
</dbReference>
<dbReference type="InterPro" id="IPR045075">
    <property type="entry name" value="Syf1-like"/>
</dbReference>
<dbReference type="InterPro" id="IPR011990">
    <property type="entry name" value="TPR-like_helical_dom_sf"/>
</dbReference>
<dbReference type="PANTHER" id="PTHR11246:SF3">
    <property type="entry name" value="CROOKED NECK-LIKE PROTEIN 1"/>
    <property type="match status" value="1"/>
</dbReference>
<dbReference type="PANTHER" id="PTHR11246">
    <property type="entry name" value="PRE-MRNA SPLICING FACTOR"/>
    <property type="match status" value="1"/>
</dbReference>
<dbReference type="Pfam" id="PF23231">
    <property type="entry name" value="HAT_Syf1_CNRKL1_C"/>
    <property type="match status" value="2"/>
</dbReference>
<dbReference type="SMART" id="SM00386">
    <property type="entry name" value="HAT"/>
    <property type="match status" value="13"/>
</dbReference>
<dbReference type="SUPFAM" id="SSF48452">
    <property type="entry name" value="TPR-like"/>
    <property type="match status" value="2"/>
</dbReference>
<gene>
    <name type="primary">CRNKL1</name>
    <name type="synonym">CRN</name>
    <name type="ORF">CGI-201</name>
    <name type="ORF">MSTP021</name>
</gene>
<keyword id="KW-0002">3D-structure</keyword>
<keyword id="KW-0007">Acetylation</keyword>
<keyword id="KW-0025">Alternative splicing</keyword>
<keyword id="KW-0507">mRNA processing</keyword>
<keyword id="KW-0508">mRNA splicing</keyword>
<keyword id="KW-0539">Nucleus</keyword>
<keyword id="KW-0597">Phosphoprotein</keyword>
<keyword id="KW-1267">Proteomics identification</keyword>
<keyword id="KW-1185">Reference proteome</keyword>
<keyword id="KW-0677">Repeat</keyword>
<keyword id="KW-0747">Spliceosome</keyword>
<sequence length="848" mass="100452">MTATVENLTFQKDTLGNAVDKNTSRLELRSYSLAGRHGSTEPLVLAWSSQFRRLTWGCALDALHRSPCVAASQHGVTHLIRSSRTPHSTRCRKEDAQPGHHGNGAASVTAQARGQRSVLQVPLPVPRSCLFSESFVVSVSSQSRFLASVPGTGVQRSTAADMAASTAAGKQRIPKVAKVKNKAPAEVQITAEQLLREAKERELELLPPPPQQKITDEEELNDYKLRKRKTFEDNIRKNRTVISNWIKYAQWEESLKEIQRARSIYERALDVDYRNITLWLKYAEMEMKNRQVNHARNIWDRAITTLPRVNQFWYKYTYMEEMLGNVAGARQVFERWMEWQPEEQAWHSYINFELRYKEVDRARTIYERFVLVHPDVKNWIKYARFEEKHAYFAHARKVYERAVEFFGDEHMDEHLYVAFAKFEENQKEFERVRVIYKYALDRISKQDAQELFKNYTIFEKKFGDRRGIEDIIVSKRRFQYEEEVKANPHNYDAWFDYLRLVESDAEAEAVREVYERAIANVPPIQEKRHWKRYIYLWINYALYEELEAKDPERTRQVYQASLELIPHKKFTFAKMWILYAQFEIRQKNLSLARRALGTSIGKCPKNKLFKVYIELELQLREFDRCRKLYEKFLEFGPENCTSWIKFAELETILGDIDRARAIYELAISQPRLDMPEVLWKSYIDFEIEQEETERTRNLYRRLLQRTQHVKVWISFAQFELSSGKEGSLTKCRQIYEEANKTMRNCEEKEERLMLLESWRSFEEEFGTASDKERVDKLMPEKVKKRRKVQTDDGSDAGWEEYFDYIFPEDAANQPNLKLLAMAKLWKKQQQEKEDAEHHPDEDVDESES</sequence>
<name>CRNL1_HUMAN</name>
<feature type="chain" id="PRO_0000205719" description="Crooked neck-like protein 1">
    <location>
        <begin position="1"/>
        <end position="848"/>
    </location>
</feature>
<feature type="repeat" description="HAT 1">
    <location>
        <begin position="222"/>
        <end position="254"/>
    </location>
</feature>
<feature type="repeat" description="HAT 2">
    <location>
        <begin position="256"/>
        <end position="288"/>
    </location>
</feature>
<feature type="repeat" description="HAT 3">
    <location>
        <begin position="290"/>
        <end position="322"/>
    </location>
</feature>
<feature type="repeat" description="HAT 4">
    <location>
        <begin position="324"/>
        <end position="355"/>
    </location>
</feature>
<feature type="repeat" description="HAT 5">
    <location>
        <begin position="357"/>
        <end position="388"/>
    </location>
</feature>
<feature type="repeat" description="HAT 6">
    <location>
        <begin position="390"/>
        <end position="425"/>
    </location>
</feature>
<feature type="repeat" description="HAT 7">
    <location>
        <begin position="427"/>
        <end position="461"/>
    </location>
</feature>
<feature type="repeat" description="HAT 8">
    <location>
        <begin position="471"/>
        <end position="503"/>
    </location>
</feature>
<feature type="repeat" description="HAT 9">
    <location>
        <begin position="505"/>
        <end position="539"/>
    </location>
</feature>
<feature type="repeat" description="HAT 10">
    <location>
        <begin position="549"/>
        <end position="585"/>
    </location>
</feature>
<feature type="repeat" description="HAT 11">
    <location>
        <begin position="587"/>
        <end position="618"/>
    </location>
</feature>
<feature type="repeat" description="HAT 12">
    <location>
        <begin position="620"/>
        <end position="652"/>
    </location>
</feature>
<feature type="repeat" description="HAT 13">
    <location>
        <begin position="654"/>
        <end position="688"/>
    </location>
</feature>
<feature type="repeat" description="HAT 14">
    <location>
        <begin position="690"/>
        <end position="721"/>
    </location>
</feature>
<feature type="repeat" description="HAT 15">
    <location>
        <begin position="726"/>
        <end position="767"/>
    </location>
</feature>
<feature type="repeat" description="HAT 16">
    <location>
        <begin position="769"/>
        <end position="807"/>
    </location>
</feature>
<feature type="repeat" description="HAT 17">
    <location>
        <begin position="809"/>
        <end position="834"/>
    </location>
</feature>
<feature type="region of interest" description="Disordered" evidence="2">
    <location>
        <begin position="81"/>
        <end position="106"/>
    </location>
</feature>
<feature type="region of interest" description="Mediates interaction with HSP90" evidence="1">
    <location>
        <begin position="411"/>
        <end position="628"/>
    </location>
</feature>
<feature type="region of interest" description="Disordered" evidence="2">
    <location>
        <begin position="827"/>
        <end position="848"/>
    </location>
</feature>
<feature type="compositionally biased region" description="Basic and acidic residues" evidence="2">
    <location>
        <begin position="828"/>
        <end position="840"/>
    </location>
</feature>
<feature type="modified residue" description="Phosphoserine" evidence="19">
    <location>
        <position position="503"/>
    </location>
</feature>
<feature type="splice variant" id="VSP_002058" description="In isoform 2." evidence="11 12">
    <location>
        <begin position="1"/>
        <end position="161"/>
    </location>
</feature>
<feature type="splice variant" id="VSP_002060" description="In isoform 5." evidence="11">
    <original>TSRLELRSYSLAGRHGSTEPLVLAWSSQFRRLTWGCALDALHRSPCVAASQH</original>
    <variation>ILASLLVSTALPTSSAAPGRRTPRAAARRTRSLVTMETVPPPSRLKREVKGQ</variation>
    <location>
        <begin position="23"/>
        <end position="74"/>
    </location>
</feature>
<feature type="splice variant" id="VSP_002059" description="In isoform 3 and isoform 4." evidence="11">
    <location>
        <begin position="23"/>
        <end position="34"/>
    </location>
</feature>
<feature type="splice variant" id="VSP_002061" description="In isoform 5." evidence="11">
    <location>
        <begin position="75"/>
        <end position="848"/>
    </location>
</feature>
<feature type="splice variant" id="VSP_002062" description="In isoform 4." evidence="11">
    <location>
        <begin position="117"/>
        <end position="848"/>
    </location>
</feature>
<feature type="sequence variant" id="VAR_024995" description="In dbSNP:rs7508949." evidence="3">
    <original>G</original>
    <variation>R</variation>
    <location>
        <position position="35"/>
    </location>
</feature>
<feature type="sequence variant" id="VAR_049318" description="In dbSNP:rs2273058.">
    <original>F</original>
    <variation>L</variation>
    <location>
        <position position="51"/>
    </location>
</feature>
<feature type="sequence variant" id="VAR_049319" description="In dbSNP:rs2255258.">
    <original>Q</original>
    <variation>H</variation>
    <location>
        <position position="111"/>
    </location>
</feature>
<feature type="sequence variant" id="VAR_049320" description="In dbSNP:rs2255255.">
    <original>T</original>
    <variation>A</variation>
    <location>
        <position position="158"/>
    </location>
</feature>
<feature type="sequence variant" id="VAR_049321" description="In dbSNP:rs35201190.">
    <original>V</original>
    <variation>I</variation>
    <location>
        <position position="843"/>
    </location>
</feature>
<feature type="sequence conflict" description="In Ref. 1; AAF65571/AAK01924/AAK01925." evidence="13" ref="1">
    <original>K</original>
    <variation>R</variation>
    <location>
        <position position="213"/>
    </location>
</feature>
<feature type="sequence conflict" description="In Ref. 4; BAB14659." evidence="13" ref="4">
    <original>V</original>
    <variation>A</variation>
    <location>
        <position position="513"/>
    </location>
</feature>
<feature type="helix" evidence="22">
    <location>
        <begin position="191"/>
        <end position="199"/>
    </location>
</feature>
<feature type="helix" evidence="22">
    <location>
        <begin position="217"/>
        <end position="238"/>
    </location>
</feature>
<feature type="strand" evidence="22">
    <location>
        <begin position="239"/>
        <end position="241"/>
    </location>
</feature>
<feature type="helix" evidence="22">
    <location>
        <begin position="243"/>
        <end position="253"/>
    </location>
</feature>
<feature type="turn" evidence="22">
    <location>
        <begin position="254"/>
        <end position="256"/>
    </location>
</feature>
<feature type="helix" evidence="22">
    <location>
        <begin position="258"/>
        <end position="271"/>
    </location>
</feature>
<feature type="helix" evidence="22">
    <location>
        <begin position="276"/>
        <end position="288"/>
    </location>
</feature>
<feature type="helix" evidence="22">
    <location>
        <begin position="292"/>
        <end position="305"/>
    </location>
</feature>
<feature type="helix" evidence="22">
    <location>
        <begin position="310"/>
        <end position="322"/>
    </location>
</feature>
<feature type="helix" evidence="22">
    <location>
        <begin position="326"/>
        <end position="337"/>
    </location>
</feature>
<feature type="helix" evidence="22">
    <location>
        <begin position="343"/>
        <end position="356"/>
    </location>
</feature>
<feature type="helix" evidence="22">
    <location>
        <begin position="359"/>
        <end position="372"/>
    </location>
</feature>
<feature type="helix" evidence="22">
    <location>
        <begin position="376"/>
        <end position="388"/>
    </location>
</feature>
<feature type="helix" evidence="22">
    <location>
        <begin position="392"/>
        <end position="405"/>
    </location>
</feature>
<feature type="strand" evidence="22">
    <location>
        <begin position="408"/>
        <end position="410"/>
    </location>
</feature>
<feature type="helix" evidence="20">
    <location>
        <begin position="411"/>
        <end position="413"/>
    </location>
</feature>
<feature type="helix" evidence="22">
    <location>
        <begin position="414"/>
        <end position="425"/>
    </location>
</feature>
<feature type="helix" evidence="22">
    <location>
        <begin position="430"/>
        <end position="439"/>
    </location>
</feature>
<feature type="turn" evidence="22">
    <location>
        <begin position="440"/>
        <end position="444"/>
    </location>
</feature>
<feature type="helix" evidence="22">
    <location>
        <begin position="452"/>
        <end position="466"/>
    </location>
</feature>
<feature type="helix" evidence="22">
    <location>
        <begin position="478"/>
        <end position="490"/>
    </location>
</feature>
<feature type="helix" evidence="22">
    <location>
        <begin position="497"/>
        <end position="512"/>
    </location>
</feature>
<feature type="helix" evidence="22">
    <location>
        <begin position="521"/>
        <end position="533"/>
    </location>
</feature>
<feature type="turn" evidence="21">
    <location>
        <begin position="538"/>
        <end position="540"/>
    </location>
</feature>
<feature type="helix" evidence="22">
    <location>
        <begin position="541"/>
        <end position="554"/>
    </location>
</feature>
<feature type="helix" evidence="22">
    <location>
        <begin position="560"/>
        <end position="568"/>
    </location>
</feature>
<feature type="helix" evidence="22">
    <location>
        <begin position="574"/>
        <end position="580"/>
    </location>
</feature>
<feature type="turn" evidence="22">
    <location>
        <begin position="585"/>
        <end position="587"/>
    </location>
</feature>
<feature type="turn" evidence="22">
    <location>
        <begin position="590"/>
        <end position="593"/>
    </location>
</feature>
<feature type="helix" evidence="22">
    <location>
        <begin position="594"/>
        <end position="596"/>
    </location>
</feature>
<feature type="helix" evidence="22">
    <location>
        <begin position="599"/>
        <end position="602"/>
    </location>
</feature>
<feature type="helix" evidence="22">
    <location>
        <begin position="610"/>
        <end position="623"/>
    </location>
</feature>
<feature type="turn" evidence="22">
    <location>
        <begin position="632"/>
        <end position="634"/>
    </location>
</feature>
<feature type="helix" evidence="22">
    <location>
        <begin position="635"/>
        <end position="642"/>
    </location>
</feature>
<feature type="helix" evidence="22">
    <location>
        <begin position="650"/>
        <end position="659"/>
    </location>
</feature>
<feature type="helix" evidence="22">
    <location>
        <begin position="668"/>
        <end position="678"/>
    </location>
</feature>
<feature type="helix" evidence="22">
    <location>
        <begin position="684"/>
        <end position="695"/>
    </location>
</feature>
<feature type="helix" evidence="22">
    <location>
        <begin position="700"/>
        <end position="707"/>
    </location>
</feature>
<feature type="helix" evidence="22">
    <location>
        <begin position="719"/>
        <end position="730"/>
    </location>
</feature>
<feature type="helix" evidence="22">
    <location>
        <begin position="742"/>
        <end position="754"/>
    </location>
</feature>
<feature type="helix" evidence="22">
    <location>
        <begin position="765"/>
        <end position="774"/>
    </location>
</feature>
<feature type="helix" evidence="22">
    <location>
        <begin position="782"/>
        <end position="799"/>
    </location>
</feature>
<feature type="initiator methionine" description="Removed" evidence="18">
    <location sequence="Q9BZJ0-2">
        <position position="1"/>
    </location>
</feature>
<feature type="modified residue" description="N-acetylalanine" evidence="18">
    <location sequence="Q9BZJ0-2">
        <position position="2"/>
    </location>
</feature>
<accession>Q9BZJ0</accession>
<accession>A8K9T4</accession>
<accession>Q5JY64</accession>
<accession>Q8WYI5</accession>
<accession>Q9BZI9</accession>
<accession>Q9BZJ1</accession>
<accession>Q9BZJ2</accession>
<accession>Q9GZW7</accession>
<accession>Q9H8F8</accession>
<accession>Q9NQH5</accession>
<accession>Q9NYD8</accession>
<protein>
    <recommendedName>
        <fullName>Crooked neck-like protein 1</fullName>
    </recommendedName>
    <alternativeName>
        <fullName>Crooked neck homolog</fullName>
        <shortName>hCrn</shortName>
    </alternativeName>
</protein>
<comment type="function">
    <text evidence="4 5 8 9 14">Involved in pre-mRNA splicing process (PubMed:11991638, PubMed:12084575, PubMed:28076346, PubMed:28502770). As a component of the minor spliceosome, involved in the splicing of U12-type introns in pre-mRNAs (Probable).</text>
</comment>
<comment type="subunit">
    <text evidence="4 5 7 10">Identified in the spliceosome C complex (PubMed:11991638, PubMed:28076346, PubMed:28502770). Present in a spliceosome complex assembled in vitro containing CRNKL1, HPRP8BP and SNRPB2 (PubMed:12084575). Component of the minor spliceosome, which splices U12-type introns (PubMed:33509932). Isoform 2 seems to be predominant in the spliceosome complex (PubMed:12084575). Interacts with PPIL2 (via the PPIase cyclophilin-type domain); they may form a trimeric complex with HSP90 (PubMed:15189447).</text>
</comment>
<comment type="interaction">
    <interactant intactId="EBI-1049701">
        <id>Q9BZJ0</id>
    </interactant>
    <interactant intactId="EBI-2557572">
        <id>Q8WUD4</id>
        <label>CCDC12</label>
    </interactant>
    <organismsDiffer>false</organismsDiffer>
    <experiments>4</experiments>
</comment>
<comment type="subcellular location">
    <subcellularLocation>
        <location evidence="4 6 8 9">Nucleus</location>
    </subcellularLocation>
    <subcellularLocation>
        <location evidence="5">Nucleus speckle</location>
    </subcellularLocation>
    <text evidence="5">Colocalizes with core spliceosomal snRNP proteins (PubMed:12084575).</text>
</comment>
<comment type="alternative products">
    <event type="alternative splicing"/>
    <isoform>
        <id>Q9BZJ0-1</id>
        <name>1</name>
        <name>Type-II</name>
        <sequence type="displayed"/>
    </isoform>
    <isoform>
        <id>Q9BZJ0-2</id>
        <name>2</name>
        <name>Short</name>
        <sequence type="described" ref="VSP_002058"/>
    </isoform>
    <isoform>
        <id>Q9BZJ0-3</id>
        <name>3</name>
        <sequence type="described" ref="VSP_002059"/>
    </isoform>
    <isoform>
        <id>Q9BZJ0-4</id>
        <name>4</name>
        <name>Type-III</name>
        <sequence type="described" ref="VSP_002059 VSP_002062"/>
    </isoform>
    <isoform>
        <id>Q9BZJ0-5</id>
        <name>5</name>
        <name>type-IV</name>
        <sequence type="described" ref="VSP_002060 VSP_002061"/>
    </isoform>
</comment>
<comment type="tissue specificity">
    <text evidence="3 5">Widely expressed (PubMed:11342225). Highly expressed in testis (PubMed:12084575). Not detected in brain and lung (PubMed:12084575).</text>
</comment>
<comment type="miscellaneous">
    <molecule>Isoform 4</molecule>
    <text evidence="13">May be produced at very low levels due to a premature stop codon in the mRNA, leading to nonsense-mediated mRNA decay.</text>
</comment>
<comment type="miscellaneous">
    <molecule>Isoform 5</molecule>
    <text evidence="13">May be produced at very low levels due to a premature stop codon in the mRNA, leading to nonsense-mediated mRNA decay.</text>
</comment>
<comment type="similarity">
    <text evidence="13">Belongs to the crooked-neck family.</text>
</comment>
<comment type="sequence caution" evidence="13">
    <conflict type="erroneous initiation">
        <sequence resource="EMBL-CDS" id="BAB14303"/>
    </conflict>
    <text>Truncated N-terminus.</text>
</comment>
<comment type="sequence caution" evidence="13">
    <conflict type="erroneous initiation">
        <sequence resource="EMBL-CDS" id="BAB14485"/>
    </conflict>
    <text>Truncated N-terminus.</text>
</comment>
<organism>
    <name type="scientific">Homo sapiens</name>
    <name type="common">Human</name>
    <dbReference type="NCBI Taxonomy" id="9606"/>
    <lineage>
        <taxon>Eukaryota</taxon>
        <taxon>Metazoa</taxon>
        <taxon>Chordata</taxon>
        <taxon>Craniata</taxon>
        <taxon>Vertebrata</taxon>
        <taxon>Euteleostomi</taxon>
        <taxon>Mammalia</taxon>
        <taxon>Eutheria</taxon>
        <taxon>Euarchontoglires</taxon>
        <taxon>Primates</taxon>
        <taxon>Haplorrhini</taxon>
        <taxon>Catarrhini</taxon>
        <taxon>Hominidae</taxon>
        <taxon>Homo</taxon>
    </lineage>
</organism>
<proteinExistence type="evidence at protein level"/>
<evidence type="ECO:0000250" key="1">
    <source>
        <dbReference type="UniProtKB" id="P63154"/>
    </source>
</evidence>
<evidence type="ECO:0000256" key="2">
    <source>
        <dbReference type="SAM" id="MobiDB-lite"/>
    </source>
</evidence>
<evidence type="ECO:0000269" key="3">
    <source>
    </source>
</evidence>
<evidence type="ECO:0000269" key="4">
    <source>
    </source>
</evidence>
<evidence type="ECO:0000269" key="5">
    <source>
    </source>
</evidence>
<evidence type="ECO:0000269" key="6">
    <source>
    </source>
</evidence>
<evidence type="ECO:0000269" key="7">
    <source>
    </source>
</evidence>
<evidence type="ECO:0000269" key="8">
    <source>
    </source>
</evidence>
<evidence type="ECO:0000269" key="9">
    <source>
    </source>
</evidence>
<evidence type="ECO:0000269" key="10">
    <source>
    </source>
</evidence>
<evidence type="ECO:0000303" key="11">
    <source>
    </source>
</evidence>
<evidence type="ECO:0000303" key="12">
    <source>
    </source>
</evidence>
<evidence type="ECO:0000305" key="13"/>
<evidence type="ECO:0000305" key="14">
    <source>
    </source>
</evidence>
<evidence type="ECO:0007744" key="15">
    <source>
        <dbReference type="PDB" id="5MQF"/>
    </source>
</evidence>
<evidence type="ECO:0007744" key="16">
    <source>
        <dbReference type="PDB" id="5XJC"/>
    </source>
</evidence>
<evidence type="ECO:0007744" key="17">
    <source>
        <dbReference type="PDB" id="7DVQ"/>
    </source>
</evidence>
<evidence type="ECO:0007744" key="18">
    <source>
    </source>
</evidence>
<evidence type="ECO:0007744" key="19">
    <source>
    </source>
</evidence>
<evidence type="ECO:0007829" key="20">
    <source>
        <dbReference type="PDB" id="6FF4"/>
    </source>
</evidence>
<evidence type="ECO:0007829" key="21">
    <source>
        <dbReference type="PDB" id="6ICZ"/>
    </source>
</evidence>
<evidence type="ECO:0007829" key="22">
    <source>
        <dbReference type="PDB" id="6ID1"/>
    </source>
</evidence>